<keyword id="KW-0004">4Fe-4S</keyword>
<keyword id="KW-0408">Iron</keyword>
<keyword id="KW-0411">Iron-sulfur</keyword>
<keyword id="KW-0456">Lyase</keyword>
<keyword id="KW-0479">Metal-binding</keyword>
<keyword id="KW-0949">S-adenosyl-L-methionine</keyword>
<keyword id="KW-0784">Thiamine biosynthesis</keyword>
<keyword id="KW-0862">Zinc</keyword>
<feature type="chain" id="PRO_1000075436" description="Phosphomethylpyrimidine synthase">
    <location>
        <begin position="1"/>
        <end position="431"/>
    </location>
</feature>
<feature type="binding site" evidence="1">
    <location>
        <position position="66"/>
    </location>
    <ligand>
        <name>substrate</name>
    </ligand>
</feature>
<feature type="binding site" evidence="1">
    <location>
        <position position="95"/>
    </location>
    <ligand>
        <name>substrate</name>
    </ligand>
</feature>
<feature type="binding site" evidence="1">
    <location>
        <position position="124"/>
    </location>
    <ligand>
        <name>substrate</name>
    </ligand>
</feature>
<feature type="binding site" evidence="1">
    <location>
        <position position="163"/>
    </location>
    <ligand>
        <name>substrate</name>
    </ligand>
</feature>
<feature type="binding site" evidence="1">
    <location>
        <begin position="185"/>
        <end position="187"/>
    </location>
    <ligand>
        <name>substrate</name>
    </ligand>
</feature>
<feature type="binding site" evidence="1">
    <location>
        <begin position="226"/>
        <end position="229"/>
    </location>
    <ligand>
        <name>substrate</name>
    </ligand>
</feature>
<feature type="binding site" evidence="1">
    <location>
        <position position="265"/>
    </location>
    <ligand>
        <name>substrate</name>
    </ligand>
</feature>
<feature type="binding site" evidence="1">
    <location>
        <position position="269"/>
    </location>
    <ligand>
        <name>Zn(2+)</name>
        <dbReference type="ChEBI" id="CHEBI:29105"/>
    </ligand>
</feature>
<feature type="binding site" evidence="1">
    <location>
        <position position="292"/>
    </location>
    <ligand>
        <name>substrate</name>
    </ligand>
</feature>
<feature type="binding site" evidence="1">
    <location>
        <position position="333"/>
    </location>
    <ligand>
        <name>Zn(2+)</name>
        <dbReference type="ChEBI" id="CHEBI:29105"/>
    </ligand>
</feature>
<feature type="binding site" evidence="1">
    <location>
        <position position="408"/>
    </location>
    <ligand>
        <name>[4Fe-4S] cluster</name>
        <dbReference type="ChEBI" id="CHEBI:49883"/>
        <note>4Fe-4S-S-AdoMet</note>
    </ligand>
</feature>
<feature type="binding site" evidence="1">
    <location>
        <position position="411"/>
    </location>
    <ligand>
        <name>[4Fe-4S] cluster</name>
        <dbReference type="ChEBI" id="CHEBI:49883"/>
        <note>4Fe-4S-S-AdoMet</note>
    </ligand>
</feature>
<feature type="binding site" evidence="1">
    <location>
        <position position="415"/>
    </location>
    <ligand>
        <name>[4Fe-4S] cluster</name>
        <dbReference type="ChEBI" id="CHEBI:49883"/>
        <note>4Fe-4S-S-AdoMet</note>
    </ligand>
</feature>
<sequence length="431" mass="46373">MTQLKQARKGIVTPEMEAVAKTEGLQPEFILKGIADGNIVIPVNKLRKNLKLCGIGKGLSTKVNANIGTSTDFGSVASEVEKLKMAEMVGADTIMDLSTGPKINTIRKAILENTCLPLGTVPVYQAAVEAKDRYGAMVKMTADDLFGAIESQAREGVDFVTVHCGVTRQVIDTFKGQGRLTDIVSRGGTFTAGWMVFHGAENPLYEHFDRLLDICREYDVTLSLGDGLRPGCIADATDRAQVAELLVLGELVKRAREAEVQVMVEGPGHVPLNQIEANVRLQKSICEDAPFYVLGPLVTDIAPGYDHITGAIGGAIAAAAGADFLCYVTPAEHLSLPDVTDVRNGVIASRIAAHAADIVKGVNGAAERDRQMAIARKKLDWETQLKLSLDPEHARVTRDRFKTRGKACSMCGDFCAMELAEKHLGVSVSRC</sequence>
<evidence type="ECO:0000255" key="1">
    <source>
        <dbReference type="HAMAP-Rule" id="MF_00089"/>
    </source>
</evidence>
<protein>
    <recommendedName>
        <fullName evidence="1">Phosphomethylpyrimidine synthase</fullName>
        <ecNumber evidence="1">4.1.99.17</ecNumber>
    </recommendedName>
    <alternativeName>
        <fullName evidence="1">Hydroxymethylpyrimidine phosphate synthase</fullName>
        <shortName evidence="1">HMP-P synthase</shortName>
        <shortName evidence="1">HMP-phosphate synthase</shortName>
        <shortName evidence="1">HMPP synthase</shortName>
    </alternativeName>
    <alternativeName>
        <fullName evidence="1">Thiamine biosynthesis protein ThiC</fullName>
    </alternativeName>
</protein>
<accession>A5FR94</accession>
<organism>
    <name type="scientific">Dehalococcoides mccartyi (strain ATCC BAA-2100 / JCM 16839 / KCTC 5957 / BAV1)</name>
    <dbReference type="NCBI Taxonomy" id="216389"/>
    <lineage>
        <taxon>Bacteria</taxon>
        <taxon>Bacillati</taxon>
        <taxon>Chloroflexota</taxon>
        <taxon>Dehalococcoidia</taxon>
        <taxon>Dehalococcoidales</taxon>
        <taxon>Dehalococcoidaceae</taxon>
        <taxon>Dehalococcoides</taxon>
    </lineage>
</organism>
<gene>
    <name evidence="1" type="primary">thiC</name>
    <name type="ordered locus">DehaBAV1_0701</name>
</gene>
<proteinExistence type="inferred from homology"/>
<dbReference type="EC" id="4.1.99.17" evidence="1"/>
<dbReference type="EMBL" id="CP000688">
    <property type="protein sequence ID" value="ABQ17285.1"/>
    <property type="molecule type" value="Genomic_DNA"/>
</dbReference>
<dbReference type="SMR" id="A5FR94"/>
<dbReference type="KEGG" id="deb:DehaBAV1_0701"/>
<dbReference type="PATRIC" id="fig|216389.18.peg.750"/>
<dbReference type="HOGENOM" id="CLU_013181_2_2_0"/>
<dbReference type="UniPathway" id="UPA00060"/>
<dbReference type="GO" id="GO:0051539">
    <property type="term" value="F:4 iron, 4 sulfur cluster binding"/>
    <property type="evidence" value="ECO:0007669"/>
    <property type="project" value="UniProtKB-KW"/>
</dbReference>
<dbReference type="GO" id="GO:0016830">
    <property type="term" value="F:carbon-carbon lyase activity"/>
    <property type="evidence" value="ECO:0007669"/>
    <property type="project" value="InterPro"/>
</dbReference>
<dbReference type="GO" id="GO:0008270">
    <property type="term" value="F:zinc ion binding"/>
    <property type="evidence" value="ECO:0007669"/>
    <property type="project" value="UniProtKB-UniRule"/>
</dbReference>
<dbReference type="GO" id="GO:0009228">
    <property type="term" value="P:thiamine biosynthetic process"/>
    <property type="evidence" value="ECO:0007669"/>
    <property type="project" value="UniProtKB-KW"/>
</dbReference>
<dbReference type="GO" id="GO:0009229">
    <property type="term" value="P:thiamine diphosphate biosynthetic process"/>
    <property type="evidence" value="ECO:0007669"/>
    <property type="project" value="UniProtKB-UniRule"/>
</dbReference>
<dbReference type="FunFam" id="3.20.20.540:FF:000001">
    <property type="entry name" value="Phosphomethylpyrimidine synthase"/>
    <property type="match status" value="1"/>
</dbReference>
<dbReference type="Gene3D" id="6.10.250.620">
    <property type="match status" value="1"/>
</dbReference>
<dbReference type="Gene3D" id="3.20.20.540">
    <property type="entry name" value="Radical SAM ThiC family, central domain"/>
    <property type="match status" value="1"/>
</dbReference>
<dbReference type="HAMAP" id="MF_00089">
    <property type="entry name" value="ThiC"/>
    <property type="match status" value="1"/>
</dbReference>
<dbReference type="InterPro" id="IPR037509">
    <property type="entry name" value="ThiC"/>
</dbReference>
<dbReference type="InterPro" id="IPR038521">
    <property type="entry name" value="ThiC/Bza_core_dom"/>
</dbReference>
<dbReference type="InterPro" id="IPR002817">
    <property type="entry name" value="ThiC/BzaA/B"/>
</dbReference>
<dbReference type="NCBIfam" id="NF009895">
    <property type="entry name" value="PRK13352.1"/>
    <property type="match status" value="1"/>
</dbReference>
<dbReference type="NCBIfam" id="TIGR00190">
    <property type="entry name" value="thiC"/>
    <property type="match status" value="1"/>
</dbReference>
<dbReference type="PANTHER" id="PTHR30557:SF1">
    <property type="entry name" value="PHOSPHOMETHYLPYRIMIDINE SYNTHASE, CHLOROPLASTIC"/>
    <property type="match status" value="1"/>
</dbReference>
<dbReference type="PANTHER" id="PTHR30557">
    <property type="entry name" value="THIAMINE BIOSYNTHESIS PROTEIN THIC"/>
    <property type="match status" value="1"/>
</dbReference>
<dbReference type="Pfam" id="PF01964">
    <property type="entry name" value="ThiC_Rad_SAM"/>
    <property type="match status" value="1"/>
</dbReference>
<dbReference type="SFLD" id="SFLDF00407">
    <property type="entry name" value="phosphomethylpyrimidine_syntha"/>
    <property type="match status" value="1"/>
</dbReference>
<dbReference type="SFLD" id="SFLDG01114">
    <property type="entry name" value="phosphomethylpyrimidine_syntha"/>
    <property type="match status" value="1"/>
</dbReference>
<dbReference type="SFLD" id="SFLDS00113">
    <property type="entry name" value="Radical_SAM_Phosphomethylpyrim"/>
    <property type="match status" value="1"/>
</dbReference>
<reference key="1">
    <citation type="submission" date="2007-05" db="EMBL/GenBank/DDBJ databases">
        <title>Complete sequence of Dehalococcoides sp. BAV1.</title>
        <authorList>
            <consortium name="US DOE Joint Genome Institute"/>
            <person name="Copeland A."/>
            <person name="Lucas S."/>
            <person name="Lapidus A."/>
            <person name="Barry K."/>
            <person name="Detter J.C."/>
            <person name="Glavina del Rio T."/>
            <person name="Hammon N."/>
            <person name="Israni S."/>
            <person name="Pitluck S."/>
            <person name="Lowry S."/>
            <person name="Clum A."/>
            <person name="Schmutz J."/>
            <person name="Larimer F."/>
            <person name="Land M."/>
            <person name="Hauser L."/>
            <person name="Kyrpides N."/>
            <person name="Kim E."/>
            <person name="Ritalahti K.M."/>
            <person name="Loeffler F."/>
            <person name="Richardson P."/>
        </authorList>
    </citation>
    <scope>NUCLEOTIDE SEQUENCE [LARGE SCALE GENOMIC DNA]</scope>
    <source>
        <strain>ATCC BAA-2100 / JCM 16839 / KCTC 5957 / BAV1</strain>
    </source>
</reference>
<name>THIC_DEHMB</name>
<comment type="function">
    <text evidence="1">Catalyzes the synthesis of the hydroxymethylpyrimidine phosphate (HMP-P) moiety of thiamine from aminoimidazole ribotide (AIR) in a radical S-adenosyl-L-methionine (SAM)-dependent reaction.</text>
</comment>
<comment type="catalytic activity">
    <reaction evidence="1">
        <text>5-amino-1-(5-phospho-beta-D-ribosyl)imidazole + S-adenosyl-L-methionine = 4-amino-2-methyl-5-(phosphooxymethyl)pyrimidine + CO + 5'-deoxyadenosine + formate + L-methionine + 3 H(+)</text>
        <dbReference type="Rhea" id="RHEA:24840"/>
        <dbReference type="ChEBI" id="CHEBI:15378"/>
        <dbReference type="ChEBI" id="CHEBI:15740"/>
        <dbReference type="ChEBI" id="CHEBI:17245"/>
        <dbReference type="ChEBI" id="CHEBI:17319"/>
        <dbReference type="ChEBI" id="CHEBI:57844"/>
        <dbReference type="ChEBI" id="CHEBI:58354"/>
        <dbReference type="ChEBI" id="CHEBI:59789"/>
        <dbReference type="ChEBI" id="CHEBI:137981"/>
        <dbReference type="EC" id="4.1.99.17"/>
    </reaction>
</comment>
<comment type="cofactor">
    <cofactor evidence="1">
        <name>[4Fe-4S] cluster</name>
        <dbReference type="ChEBI" id="CHEBI:49883"/>
    </cofactor>
    <text evidence="1">Binds 1 [4Fe-4S] cluster per subunit. The cluster is coordinated with 3 cysteines and an exchangeable S-adenosyl-L-methionine.</text>
</comment>
<comment type="pathway">
    <text evidence="1">Cofactor biosynthesis; thiamine diphosphate biosynthesis.</text>
</comment>
<comment type="similarity">
    <text evidence="1">Belongs to the ThiC family.</text>
</comment>